<keyword id="KW-1185">Reference proteome</keyword>
<feature type="chain" id="PRO_0000330394" description="HssA/B-like protein 24">
    <location>
        <begin position="1"/>
        <end position="91"/>
    </location>
</feature>
<name>HSL24_DICDI</name>
<sequence>MTIIGSIIKISNPKKFSIGGGSISNNNFISLYSSKKKKCESNSGSGLFGANNLLGGLLGSLGGNNNKQVVYHPAVSATGETIYIHSVCGCE</sequence>
<evidence type="ECO:0000305" key="1"/>
<protein>
    <recommendedName>
        <fullName>HssA/B-like protein 24</fullName>
    </recommendedName>
</protein>
<organism>
    <name type="scientific">Dictyostelium discoideum</name>
    <name type="common">Social amoeba</name>
    <dbReference type="NCBI Taxonomy" id="44689"/>
    <lineage>
        <taxon>Eukaryota</taxon>
        <taxon>Amoebozoa</taxon>
        <taxon>Evosea</taxon>
        <taxon>Eumycetozoa</taxon>
        <taxon>Dictyostelia</taxon>
        <taxon>Dictyosteliales</taxon>
        <taxon>Dictyosteliaceae</taxon>
        <taxon>Dictyostelium</taxon>
    </lineage>
</organism>
<dbReference type="EMBL" id="AAFI02000013">
    <property type="protein sequence ID" value="EAL69659.2"/>
    <property type="molecule type" value="Genomic_DNA"/>
</dbReference>
<dbReference type="RefSeq" id="XP_643411.2">
    <property type="nucleotide sequence ID" value="XM_638319.2"/>
</dbReference>
<dbReference type="PaxDb" id="44689-DDB0252808"/>
<dbReference type="EnsemblProtists" id="EAL69659">
    <property type="protein sequence ID" value="EAL69659"/>
    <property type="gene ID" value="DDB_G0275817"/>
</dbReference>
<dbReference type="GeneID" id="8619997"/>
<dbReference type="KEGG" id="ddi:DDB_G0275817"/>
<dbReference type="dictyBase" id="DDB_G0275817"/>
<dbReference type="VEuPathDB" id="AmoebaDB:DDB_G0275817"/>
<dbReference type="HOGENOM" id="CLU_2431594_0_0_1"/>
<dbReference type="InParanoid" id="Q86H93"/>
<dbReference type="PRO" id="PR:Q86H93"/>
<dbReference type="Proteomes" id="UP000002195">
    <property type="component" value="Chromosome 2"/>
</dbReference>
<dbReference type="InterPro" id="IPR008455">
    <property type="entry name" value="HssA/B-related"/>
</dbReference>
<dbReference type="Pfam" id="PF05710">
    <property type="entry name" value="Coiled"/>
    <property type="match status" value="1"/>
</dbReference>
<reference key="1">
    <citation type="journal article" date="2002" name="Nature">
        <title>Sequence and analysis of chromosome 2 of Dictyostelium discoideum.</title>
        <authorList>
            <person name="Gloeckner G."/>
            <person name="Eichinger L."/>
            <person name="Szafranski K."/>
            <person name="Pachebat J.A."/>
            <person name="Bankier A.T."/>
            <person name="Dear P.H."/>
            <person name="Lehmann R."/>
            <person name="Baumgart C."/>
            <person name="Parra G."/>
            <person name="Abril J.F."/>
            <person name="Guigo R."/>
            <person name="Kumpf K."/>
            <person name="Tunggal B."/>
            <person name="Cox E.C."/>
            <person name="Quail M.A."/>
            <person name="Platzer M."/>
            <person name="Rosenthal A."/>
            <person name="Noegel A.A."/>
        </authorList>
    </citation>
    <scope>NUCLEOTIDE SEQUENCE [LARGE SCALE GENOMIC DNA]</scope>
    <source>
        <strain>AX4</strain>
    </source>
</reference>
<reference key="2">
    <citation type="journal article" date="2005" name="Nature">
        <title>The genome of the social amoeba Dictyostelium discoideum.</title>
        <authorList>
            <person name="Eichinger L."/>
            <person name="Pachebat J.A."/>
            <person name="Gloeckner G."/>
            <person name="Rajandream M.A."/>
            <person name="Sucgang R."/>
            <person name="Berriman M."/>
            <person name="Song J."/>
            <person name="Olsen R."/>
            <person name="Szafranski K."/>
            <person name="Xu Q."/>
            <person name="Tunggal B."/>
            <person name="Kummerfeld S."/>
            <person name="Madera M."/>
            <person name="Konfortov B.A."/>
            <person name="Rivero F."/>
            <person name="Bankier A.T."/>
            <person name="Lehmann R."/>
            <person name="Hamlin N."/>
            <person name="Davies R."/>
            <person name="Gaudet P."/>
            <person name="Fey P."/>
            <person name="Pilcher K."/>
            <person name="Chen G."/>
            <person name="Saunders D."/>
            <person name="Sodergren E.J."/>
            <person name="Davis P."/>
            <person name="Kerhornou A."/>
            <person name="Nie X."/>
            <person name="Hall N."/>
            <person name="Anjard C."/>
            <person name="Hemphill L."/>
            <person name="Bason N."/>
            <person name="Farbrother P."/>
            <person name="Desany B."/>
            <person name="Just E."/>
            <person name="Morio T."/>
            <person name="Rost R."/>
            <person name="Churcher C.M."/>
            <person name="Cooper J."/>
            <person name="Haydock S."/>
            <person name="van Driessche N."/>
            <person name="Cronin A."/>
            <person name="Goodhead I."/>
            <person name="Muzny D.M."/>
            <person name="Mourier T."/>
            <person name="Pain A."/>
            <person name="Lu M."/>
            <person name="Harper D."/>
            <person name="Lindsay R."/>
            <person name="Hauser H."/>
            <person name="James K.D."/>
            <person name="Quiles M."/>
            <person name="Madan Babu M."/>
            <person name="Saito T."/>
            <person name="Buchrieser C."/>
            <person name="Wardroper A."/>
            <person name="Felder M."/>
            <person name="Thangavelu M."/>
            <person name="Johnson D."/>
            <person name="Knights A."/>
            <person name="Loulseged H."/>
            <person name="Mungall K.L."/>
            <person name="Oliver K."/>
            <person name="Price C."/>
            <person name="Quail M.A."/>
            <person name="Urushihara H."/>
            <person name="Hernandez J."/>
            <person name="Rabbinowitsch E."/>
            <person name="Steffen D."/>
            <person name="Sanders M."/>
            <person name="Ma J."/>
            <person name="Kohara Y."/>
            <person name="Sharp S."/>
            <person name="Simmonds M.N."/>
            <person name="Spiegler S."/>
            <person name="Tivey A."/>
            <person name="Sugano S."/>
            <person name="White B."/>
            <person name="Walker D."/>
            <person name="Woodward J.R."/>
            <person name="Winckler T."/>
            <person name="Tanaka Y."/>
            <person name="Shaulsky G."/>
            <person name="Schleicher M."/>
            <person name="Weinstock G.M."/>
            <person name="Rosenthal A."/>
            <person name="Cox E.C."/>
            <person name="Chisholm R.L."/>
            <person name="Gibbs R.A."/>
            <person name="Loomis W.F."/>
            <person name="Platzer M."/>
            <person name="Kay R.R."/>
            <person name="Williams J.G."/>
            <person name="Dear P.H."/>
            <person name="Noegel A.A."/>
            <person name="Barrell B.G."/>
            <person name="Kuspa A."/>
        </authorList>
    </citation>
    <scope>NUCLEOTIDE SEQUENCE [LARGE SCALE GENOMIC DNA]</scope>
    <source>
        <strain>AX4</strain>
    </source>
</reference>
<accession>Q86H93</accession>
<accession>Q553K2</accession>
<gene>
    <name type="primary">hssl24</name>
    <name type="ORF">DDB_G0275817</name>
</gene>
<proteinExistence type="inferred from homology"/>
<comment type="similarity">
    <text evidence="1">Belongs to the hssA/B family.</text>
</comment>